<name>FABA_BRASO</name>
<sequence>MLDRRGSYEYEDLLACGRGELFGPGNAQLPLPPMLMFDRIVEISETGGEFGKGVVRAELDVKPDLWFFGCHFKNDPVMPGCLGLDAMWQMVGFFLGWTGGAGRGRALGLGDLKFSGQVLPTASKVVYNVDIKRVMRSKLVLGIADGWLSMDGDIIYRAKDLKVGLFKQGAAPS</sequence>
<keyword id="KW-0963">Cytoplasm</keyword>
<keyword id="KW-0275">Fatty acid biosynthesis</keyword>
<keyword id="KW-0276">Fatty acid metabolism</keyword>
<keyword id="KW-0413">Isomerase</keyword>
<keyword id="KW-0444">Lipid biosynthesis</keyword>
<keyword id="KW-0443">Lipid metabolism</keyword>
<keyword id="KW-0456">Lyase</keyword>
<keyword id="KW-1185">Reference proteome</keyword>
<feature type="chain" id="PRO_0000301871" description="3-hydroxydecanoyl-[acyl-carrier-protein] dehydratase">
    <location>
        <begin position="1"/>
        <end position="173"/>
    </location>
</feature>
<feature type="active site" evidence="1">
    <location>
        <position position="71"/>
    </location>
</feature>
<gene>
    <name evidence="1" type="primary">fabA</name>
    <name type="ordered locus">BRADO0063</name>
</gene>
<evidence type="ECO:0000255" key="1">
    <source>
        <dbReference type="HAMAP-Rule" id="MF_00405"/>
    </source>
</evidence>
<accession>A4YJF9</accession>
<dbReference type="EC" id="4.2.1.59" evidence="1"/>
<dbReference type="EC" id="5.3.3.14" evidence="1"/>
<dbReference type="EMBL" id="CU234118">
    <property type="protein sequence ID" value="CAL74035.1"/>
    <property type="molecule type" value="Genomic_DNA"/>
</dbReference>
<dbReference type="RefSeq" id="WP_011923337.1">
    <property type="nucleotide sequence ID" value="NC_009445.1"/>
</dbReference>
<dbReference type="SMR" id="A4YJF9"/>
<dbReference type="STRING" id="114615.BRADO0063"/>
<dbReference type="KEGG" id="bra:BRADO0063"/>
<dbReference type="eggNOG" id="COG0764">
    <property type="taxonomic scope" value="Bacteria"/>
</dbReference>
<dbReference type="HOGENOM" id="CLU_097925_0_0_5"/>
<dbReference type="OrthoDB" id="9786735at2"/>
<dbReference type="UniPathway" id="UPA00094"/>
<dbReference type="Proteomes" id="UP000001994">
    <property type="component" value="Chromosome"/>
</dbReference>
<dbReference type="GO" id="GO:0005737">
    <property type="term" value="C:cytoplasm"/>
    <property type="evidence" value="ECO:0007669"/>
    <property type="project" value="UniProtKB-SubCell"/>
</dbReference>
<dbReference type="GO" id="GO:0019171">
    <property type="term" value="F:(3R)-hydroxyacyl-[acyl-carrier-protein] dehydratase activity"/>
    <property type="evidence" value="ECO:0007669"/>
    <property type="project" value="UniProtKB-UniRule"/>
</dbReference>
<dbReference type="GO" id="GO:0034017">
    <property type="term" value="F:trans-2-decenoyl-acyl-carrier-protein isomerase activity"/>
    <property type="evidence" value="ECO:0007669"/>
    <property type="project" value="UniProtKB-UniRule"/>
</dbReference>
<dbReference type="GO" id="GO:0006636">
    <property type="term" value="P:unsaturated fatty acid biosynthetic process"/>
    <property type="evidence" value="ECO:0007669"/>
    <property type="project" value="UniProtKB-UniRule"/>
</dbReference>
<dbReference type="Gene3D" id="3.10.129.10">
    <property type="entry name" value="Hotdog Thioesterase"/>
    <property type="match status" value="1"/>
</dbReference>
<dbReference type="HAMAP" id="MF_00405">
    <property type="entry name" value="FabA"/>
    <property type="match status" value="1"/>
</dbReference>
<dbReference type="InterPro" id="IPR010083">
    <property type="entry name" value="FabA"/>
</dbReference>
<dbReference type="InterPro" id="IPR013114">
    <property type="entry name" value="FabA_FabZ"/>
</dbReference>
<dbReference type="InterPro" id="IPR029069">
    <property type="entry name" value="HotDog_dom_sf"/>
</dbReference>
<dbReference type="NCBIfam" id="TIGR01749">
    <property type="entry name" value="fabA"/>
    <property type="match status" value="1"/>
</dbReference>
<dbReference type="NCBIfam" id="NF003509">
    <property type="entry name" value="PRK05174.1"/>
    <property type="match status" value="1"/>
</dbReference>
<dbReference type="PANTHER" id="PTHR30272">
    <property type="entry name" value="3-HYDROXYACYL-[ACYL-CARRIER-PROTEIN] DEHYDRATASE"/>
    <property type="match status" value="1"/>
</dbReference>
<dbReference type="PANTHER" id="PTHR30272:SF8">
    <property type="entry name" value="3-HYDROXYDECANOYL-[ACYL-CARRIER-PROTEIN] DEHYDRATASE"/>
    <property type="match status" value="1"/>
</dbReference>
<dbReference type="Pfam" id="PF07977">
    <property type="entry name" value="FabA"/>
    <property type="match status" value="1"/>
</dbReference>
<dbReference type="SUPFAM" id="SSF54637">
    <property type="entry name" value="Thioesterase/thiol ester dehydrase-isomerase"/>
    <property type="match status" value="1"/>
</dbReference>
<comment type="function">
    <text evidence="1">Necessary for the introduction of cis unsaturation into fatty acids. Catalyzes the dehydration of (3R)-3-hydroxydecanoyl-ACP to E-(2)-decenoyl-ACP and then its isomerization to Z-(3)-decenoyl-ACP. Can catalyze the dehydratase reaction for beta-hydroxyacyl-ACPs with saturated chain lengths up to 16:0, being most active on intermediate chain length.</text>
</comment>
<comment type="catalytic activity">
    <reaction evidence="1">
        <text>a (3R)-hydroxyacyl-[ACP] = a (2E)-enoyl-[ACP] + H2O</text>
        <dbReference type="Rhea" id="RHEA:13097"/>
        <dbReference type="Rhea" id="RHEA-COMP:9925"/>
        <dbReference type="Rhea" id="RHEA-COMP:9945"/>
        <dbReference type="ChEBI" id="CHEBI:15377"/>
        <dbReference type="ChEBI" id="CHEBI:78784"/>
        <dbReference type="ChEBI" id="CHEBI:78827"/>
        <dbReference type="EC" id="4.2.1.59"/>
    </reaction>
</comment>
<comment type="catalytic activity">
    <reaction evidence="1">
        <text>(3R)-hydroxydecanoyl-[ACP] = (2E)-decenoyl-[ACP] + H2O</text>
        <dbReference type="Rhea" id="RHEA:41860"/>
        <dbReference type="Rhea" id="RHEA-COMP:9638"/>
        <dbReference type="Rhea" id="RHEA-COMP:9639"/>
        <dbReference type="ChEBI" id="CHEBI:15377"/>
        <dbReference type="ChEBI" id="CHEBI:78466"/>
        <dbReference type="ChEBI" id="CHEBI:78467"/>
    </reaction>
</comment>
<comment type="catalytic activity">
    <reaction evidence="1">
        <text>(2E)-decenoyl-[ACP] = (3Z)-decenoyl-[ACP]</text>
        <dbReference type="Rhea" id="RHEA:23568"/>
        <dbReference type="Rhea" id="RHEA-COMP:9639"/>
        <dbReference type="Rhea" id="RHEA-COMP:9927"/>
        <dbReference type="ChEBI" id="CHEBI:78467"/>
        <dbReference type="ChEBI" id="CHEBI:78798"/>
        <dbReference type="EC" id="5.3.3.14"/>
    </reaction>
</comment>
<comment type="pathway">
    <text evidence="1">Lipid metabolism; fatty acid biosynthesis.</text>
</comment>
<comment type="subunit">
    <text evidence="1">Homodimer.</text>
</comment>
<comment type="subcellular location">
    <subcellularLocation>
        <location evidence="1">Cytoplasm</location>
    </subcellularLocation>
</comment>
<comment type="similarity">
    <text evidence="1">Belongs to the thioester dehydratase family. FabA subfamily.</text>
</comment>
<protein>
    <recommendedName>
        <fullName evidence="1">3-hydroxydecanoyl-[acyl-carrier-protein] dehydratase</fullName>
        <ecNumber evidence="1">4.2.1.59</ecNumber>
    </recommendedName>
    <alternativeName>
        <fullName evidence="1">3-hydroxyacyl-[acyl-carrier-protein] dehydratase FabA</fullName>
    </alternativeName>
    <alternativeName>
        <fullName evidence="1">Beta-hydroxydecanoyl thioester dehydrase</fullName>
    </alternativeName>
    <alternativeName>
        <fullName evidence="1">Trans-2-decenoyl-[acyl-carrier-protein] isomerase</fullName>
        <ecNumber evidence="1">5.3.3.14</ecNumber>
    </alternativeName>
</protein>
<proteinExistence type="inferred from homology"/>
<reference key="1">
    <citation type="journal article" date="2007" name="Science">
        <title>Legumes symbioses: absence of nod genes in photosynthetic bradyrhizobia.</title>
        <authorList>
            <person name="Giraud E."/>
            <person name="Moulin L."/>
            <person name="Vallenet D."/>
            <person name="Barbe V."/>
            <person name="Cytryn E."/>
            <person name="Avarre J.-C."/>
            <person name="Jaubert M."/>
            <person name="Simon D."/>
            <person name="Cartieaux F."/>
            <person name="Prin Y."/>
            <person name="Bena G."/>
            <person name="Hannibal L."/>
            <person name="Fardoux J."/>
            <person name="Kojadinovic M."/>
            <person name="Vuillet L."/>
            <person name="Lajus A."/>
            <person name="Cruveiller S."/>
            <person name="Rouy Z."/>
            <person name="Mangenot S."/>
            <person name="Segurens B."/>
            <person name="Dossat C."/>
            <person name="Franck W.L."/>
            <person name="Chang W.-S."/>
            <person name="Saunders E."/>
            <person name="Bruce D."/>
            <person name="Richardson P."/>
            <person name="Normand P."/>
            <person name="Dreyfus B."/>
            <person name="Pignol D."/>
            <person name="Stacey G."/>
            <person name="Emerich D."/>
            <person name="Vermeglio A."/>
            <person name="Medigue C."/>
            <person name="Sadowsky M."/>
        </authorList>
    </citation>
    <scope>NUCLEOTIDE SEQUENCE [LARGE SCALE GENOMIC DNA]</scope>
    <source>
        <strain>ORS 278</strain>
    </source>
</reference>
<organism>
    <name type="scientific">Bradyrhizobium sp. (strain ORS 278)</name>
    <dbReference type="NCBI Taxonomy" id="114615"/>
    <lineage>
        <taxon>Bacteria</taxon>
        <taxon>Pseudomonadati</taxon>
        <taxon>Pseudomonadota</taxon>
        <taxon>Alphaproteobacteria</taxon>
        <taxon>Hyphomicrobiales</taxon>
        <taxon>Nitrobacteraceae</taxon>
        <taxon>Bradyrhizobium</taxon>
    </lineage>
</organism>